<dbReference type="EC" id="2.7.7.6"/>
<dbReference type="EMBL" id="AJ294725">
    <property type="protein sequence ID" value="CAC24589.1"/>
    <property type="status" value="ALT_SEQ"/>
    <property type="molecule type" value="Genomic_DNA"/>
</dbReference>
<dbReference type="EMBL" id="AJ294725">
    <property type="protein sequence ID" value="CAC24588.1"/>
    <property type="status" value="ALT_SEQ"/>
    <property type="molecule type" value="Genomic_DNA"/>
</dbReference>
<dbReference type="PIR" id="S38600">
    <property type="entry name" value="S38600"/>
</dbReference>
<dbReference type="RefSeq" id="NP_074978.1">
    <property type="nucleotide sequence ID" value="NC_002652.1"/>
</dbReference>
<dbReference type="SMR" id="P34778"/>
<dbReference type="GO" id="GO:0000428">
    <property type="term" value="C:DNA-directed RNA polymerase complex"/>
    <property type="evidence" value="ECO:0007669"/>
    <property type="project" value="UniProtKB-KW"/>
</dbReference>
<dbReference type="GO" id="GO:0005739">
    <property type="term" value="C:mitochondrion"/>
    <property type="evidence" value="ECO:0007669"/>
    <property type="project" value="GOC"/>
</dbReference>
<dbReference type="GO" id="GO:0009536">
    <property type="term" value="C:plastid"/>
    <property type="evidence" value="ECO:0007669"/>
    <property type="project" value="UniProtKB-SubCell"/>
</dbReference>
<dbReference type="GO" id="GO:0003899">
    <property type="term" value="F:DNA-directed RNA polymerase activity"/>
    <property type="evidence" value="ECO:0007669"/>
    <property type="project" value="UniProtKB-EC"/>
</dbReference>
<dbReference type="GO" id="GO:0046983">
    <property type="term" value="F:protein dimerization activity"/>
    <property type="evidence" value="ECO:0007669"/>
    <property type="project" value="InterPro"/>
</dbReference>
<dbReference type="GO" id="GO:0006351">
    <property type="term" value="P:DNA-templated transcription"/>
    <property type="evidence" value="ECO:0007669"/>
    <property type="project" value="InterPro"/>
</dbReference>
<dbReference type="Gene3D" id="2.170.120.12">
    <property type="entry name" value="DNA-directed RNA polymerase, insert domain"/>
    <property type="match status" value="1"/>
</dbReference>
<dbReference type="InterPro" id="IPR036603">
    <property type="entry name" value="RBP11-like"/>
</dbReference>
<dbReference type="InterPro" id="IPR036643">
    <property type="entry name" value="RNApol_insert_sf"/>
</dbReference>
<dbReference type="SUPFAM" id="SSF56553">
    <property type="entry name" value="Insert subdomain of RNA polymerase alpha subunit"/>
    <property type="match status" value="1"/>
</dbReference>
<dbReference type="SUPFAM" id="SSF55257">
    <property type="entry name" value="RBP11-like subunits of RNA polymerase"/>
    <property type="match status" value="1"/>
</dbReference>
<evidence type="ECO:0000250" key="1"/>
<evidence type="ECO:0000305" key="2"/>
<proteinExistence type="inferred from homology"/>
<name>RPOA_EUGLO</name>
<geneLocation type="non-photosynthetic plastid"/>
<comment type="function">
    <text evidence="1">DNA-dependent RNA polymerase catalyzes the transcription of DNA into RNA using the four ribonucleoside triphosphates as substrates.</text>
</comment>
<comment type="catalytic activity">
    <reaction>
        <text>RNA(n) + a ribonucleoside 5'-triphosphate = RNA(n+1) + diphosphate</text>
        <dbReference type="Rhea" id="RHEA:21248"/>
        <dbReference type="Rhea" id="RHEA-COMP:14527"/>
        <dbReference type="Rhea" id="RHEA-COMP:17342"/>
        <dbReference type="ChEBI" id="CHEBI:33019"/>
        <dbReference type="ChEBI" id="CHEBI:61557"/>
        <dbReference type="ChEBI" id="CHEBI:140395"/>
        <dbReference type="EC" id="2.7.7.6"/>
    </reaction>
</comment>
<comment type="subunit">
    <text evidence="1">In plastids the minimal PEP RNA polymerase catalytic core is composed of four subunits: alpha, beta, beta', and beta''. When a (nuclear-encoded) sigma factor is associated with the core the holoenzyme is formed, which can initiate transcription (By similarity).</text>
</comment>
<comment type="subcellular location">
    <subcellularLocation>
        <location>Plastid</location>
    </subcellularLocation>
</comment>
<comment type="similarity">
    <text evidence="2">Belongs to the RNA polymerase alpha chain family.</text>
</comment>
<comment type="caution">
    <text evidence="2">The C-terminal domain thought to be required for interaction with some regulatory factors is missing from this protein.</text>
</comment>
<comment type="sequence caution" evidence="2">
    <conflict type="erroneous gene model prediction">
        <sequence resource="EMBL-CDS" id="CAC24588"/>
    </conflict>
</comment>
<comment type="sequence caution" evidence="2">
    <conflict type="erroneous gene model prediction">
        <sequence resource="EMBL-CDS" id="CAC24589"/>
    </conflict>
</comment>
<accession>P34778</accession>
<accession>P58144</accession>
<protein>
    <recommendedName>
        <fullName>DNA-directed RNA polymerase subunit alpha</fullName>
        <shortName>PEP</shortName>
        <ecNumber>2.7.7.6</ecNumber>
    </recommendedName>
    <alternativeName>
        <fullName>Plastid-encoded RNA polymerase subunit alpha</fullName>
        <shortName>RNA polymerase subunit alpha</shortName>
    </alternativeName>
</protein>
<organism>
    <name type="scientific">Euglena longa</name>
    <name type="common">Euglenophycean alga</name>
    <name type="synonym">Astasia longa</name>
    <dbReference type="NCBI Taxonomy" id="3037"/>
    <lineage>
        <taxon>Eukaryota</taxon>
        <taxon>Discoba</taxon>
        <taxon>Euglenozoa</taxon>
        <taxon>Euglenida</taxon>
        <taxon>Spirocuta</taxon>
        <taxon>Euglenophyceae</taxon>
        <taxon>Euglenales</taxon>
        <taxon>Euglenaceae</taxon>
        <taxon>Euglena</taxon>
    </lineage>
</organism>
<keyword id="KW-0240">DNA-directed RNA polymerase</keyword>
<keyword id="KW-0548">Nucleotidyltransferase</keyword>
<keyword id="KW-0934">Plastid</keyword>
<keyword id="KW-0804">Transcription</keyword>
<keyword id="KW-0808">Transferase</keyword>
<reference key="1">
    <citation type="journal article" date="1994" name="Curr. Genet.">
        <title>Genes for components of the chloroplast translational apparatus are conserved in the reduced 73-kb plastid DNA of the nonphotosynthetic euglenoid flagellate Astasia longa.</title>
        <authorList>
            <person name="Gockel G."/>
            <person name="Hachtel W."/>
            <person name="Baier S."/>
            <person name="Fliss C."/>
            <person name="Henke M."/>
        </authorList>
    </citation>
    <scope>NUCLEOTIDE SEQUENCE [GENOMIC DNA]</scope>
    <source>
        <strain>CCAP 1204-17a</strain>
    </source>
</reference>
<reference key="2">
    <citation type="journal article" date="2000" name="Protist">
        <title>Complete gene map of the plastid genome of the nonphotosynthetic euglenoid flagellate Astasia longa.</title>
        <authorList>
            <person name="Gockel G."/>
            <person name="Hachtel W."/>
        </authorList>
    </citation>
    <scope>NUCLEOTIDE SEQUENCE [LARGE SCALE GENOMIC DNA]</scope>
    <source>
        <strain>CCAP 1204-17a</strain>
    </source>
</reference>
<reference key="3">
    <citation type="journal article" date="2002" name="Nucleic Acids Res.">
        <title>Identification and comparative analysis of the chloroplast alpha-subunit gene of DNA-dependent RNA polymerase from seven Euglena species.</title>
        <authorList>
            <person name="Sheveleva E.V."/>
            <person name="Giordani N.V."/>
            <person name="Hallick R.B."/>
        </authorList>
    </citation>
    <scope>IDENTIFICATION OF GENE</scope>
</reference>
<feature type="chain" id="PRO_0000175504" description="DNA-directed RNA polymerase subunit alpha">
    <location>
        <begin position="1"/>
        <end position="220"/>
    </location>
</feature>
<sequence>MKYIKIYILRNKKFKNQNINFLKIKPFNCPNYNFFGNEIRRSLLLNIKKTMTITNIKFFISKSKSKHPKKLKIFHPVNEFFDIEEIKENLSNICINLKKLRFKFNPKNNKEKKTFIILNSFNKKSFSAKDIIIPSTSNLKIVNLKEHLFNKISQKINLKVLIKIENNENYFYNPIKRINFILEKNNNIGKYIILDLNSDININPFKAFIESLKYLNLNNT</sequence>
<gene>
    <name type="primary">rpoA</name>
</gene>